<keyword id="KW-0456">Lyase</keyword>
<evidence type="ECO:0000255" key="1">
    <source>
        <dbReference type="HAMAP-Rule" id="MF_00535"/>
    </source>
</evidence>
<name>CYNS_PSEPW</name>
<gene>
    <name evidence="1" type="primary">cynS</name>
    <name type="ordered locus">PputW619_3092</name>
</gene>
<protein>
    <recommendedName>
        <fullName evidence="1">Cyanate hydratase</fullName>
        <shortName evidence="1">Cyanase</shortName>
        <ecNumber evidence="1">4.2.1.104</ecNumber>
    </recommendedName>
    <alternativeName>
        <fullName evidence="1">Cyanate hydrolase</fullName>
    </alternativeName>
    <alternativeName>
        <fullName evidence="1">Cyanate lyase</fullName>
    </alternativeName>
</protein>
<dbReference type="EC" id="4.2.1.104" evidence="1"/>
<dbReference type="EMBL" id="CP000949">
    <property type="protein sequence ID" value="ACA73582.1"/>
    <property type="molecule type" value="Genomic_DNA"/>
</dbReference>
<dbReference type="SMR" id="B1JA05"/>
<dbReference type="STRING" id="390235.PputW619_3092"/>
<dbReference type="KEGG" id="ppw:PputW619_3092"/>
<dbReference type="eggNOG" id="COG1513">
    <property type="taxonomic scope" value="Bacteria"/>
</dbReference>
<dbReference type="HOGENOM" id="CLU_103452_1_1_6"/>
<dbReference type="OrthoDB" id="9785870at2"/>
<dbReference type="GO" id="GO:0008824">
    <property type="term" value="F:cyanate hydratase activity"/>
    <property type="evidence" value="ECO:0007669"/>
    <property type="project" value="UniProtKB-UniRule"/>
</dbReference>
<dbReference type="GO" id="GO:0003677">
    <property type="term" value="F:DNA binding"/>
    <property type="evidence" value="ECO:0007669"/>
    <property type="project" value="InterPro"/>
</dbReference>
<dbReference type="GO" id="GO:0009439">
    <property type="term" value="P:cyanate metabolic process"/>
    <property type="evidence" value="ECO:0007669"/>
    <property type="project" value="UniProtKB-UniRule"/>
</dbReference>
<dbReference type="CDD" id="cd00559">
    <property type="entry name" value="Cyanase_C"/>
    <property type="match status" value="1"/>
</dbReference>
<dbReference type="Gene3D" id="3.30.1160.10">
    <property type="entry name" value="Cyanate lyase, C-terminal domain"/>
    <property type="match status" value="1"/>
</dbReference>
<dbReference type="Gene3D" id="1.10.260.40">
    <property type="entry name" value="lambda repressor-like DNA-binding domains"/>
    <property type="match status" value="1"/>
</dbReference>
<dbReference type="HAMAP" id="MF_00535">
    <property type="entry name" value="Cyanate_hydrat"/>
    <property type="match status" value="1"/>
</dbReference>
<dbReference type="InterPro" id="IPR008076">
    <property type="entry name" value="Cyanase"/>
</dbReference>
<dbReference type="InterPro" id="IPR003712">
    <property type="entry name" value="Cyanate_lyase_C"/>
</dbReference>
<dbReference type="InterPro" id="IPR036581">
    <property type="entry name" value="Cyanate_lyase_C_sf"/>
</dbReference>
<dbReference type="InterPro" id="IPR048564">
    <property type="entry name" value="CYNS_N"/>
</dbReference>
<dbReference type="InterPro" id="IPR010982">
    <property type="entry name" value="Lambda_DNA-bd_dom_sf"/>
</dbReference>
<dbReference type="NCBIfam" id="TIGR00673">
    <property type="entry name" value="cynS"/>
    <property type="match status" value="1"/>
</dbReference>
<dbReference type="NCBIfam" id="NF002773">
    <property type="entry name" value="PRK02866.1"/>
    <property type="match status" value="1"/>
</dbReference>
<dbReference type="PANTHER" id="PTHR34186">
    <property type="entry name" value="CYANATE HYDRATASE"/>
    <property type="match status" value="1"/>
</dbReference>
<dbReference type="PANTHER" id="PTHR34186:SF2">
    <property type="entry name" value="CYANATE HYDRATASE"/>
    <property type="match status" value="1"/>
</dbReference>
<dbReference type="Pfam" id="PF02560">
    <property type="entry name" value="Cyanate_lyase"/>
    <property type="match status" value="1"/>
</dbReference>
<dbReference type="Pfam" id="PF21291">
    <property type="entry name" value="CYNS_N"/>
    <property type="match status" value="1"/>
</dbReference>
<dbReference type="PIRSF" id="PIRSF001263">
    <property type="entry name" value="Cyanate_hydratas"/>
    <property type="match status" value="1"/>
</dbReference>
<dbReference type="PRINTS" id="PR01693">
    <property type="entry name" value="CYANASE"/>
</dbReference>
<dbReference type="SMART" id="SM01116">
    <property type="entry name" value="Cyanate_lyase"/>
    <property type="match status" value="1"/>
</dbReference>
<dbReference type="SUPFAM" id="SSF55234">
    <property type="entry name" value="Cyanase C-terminal domain"/>
    <property type="match status" value="1"/>
</dbReference>
<dbReference type="SUPFAM" id="SSF47413">
    <property type="entry name" value="lambda repressor-like DNA-binding domains"/>
    <property type="match status" value="1"/>
</dbReference>
<proteinExistence type="inferred from homology"/>
<reference key="1">
    <citation type="submission" date="2008-02" db="EMBL/GenBank/DDBJ databases">
        <title>Complete sequence of Pseudomonas putida W619.</title>
        <authorList>
            <person name="Copeland A."/>
            <person name="Lucas S."/>
            <person name="Lapidus A."/>
            <person name="Barry K."/>
            <person name="Detter J.C."/>
            <person name="Glavina del Rio T."/>
            <person name="Dalin E."/>
            <person name="Tice H."/>
            <person name="Pitluck S."/>
            <person name="Chain P."/>
            <person name="Malfatti S."/>
            <person name="Shin M."/>
            <person name="Vergez L."/>
            <person name="Schmutz J."/>
            <person name="Larimer F."/>
            <person name="Land M."/>
            <person name="Hauser L."/>
            <person name="Kyrpides N."/>
            <person name="Kim E."/>
            <person name="Taghavi S."/>
            <person name="Vangronsveld D."/>
            <person name="van der Lelie D."/>
            <person name="Richardson P."/>
        </authorList>
    </citation>
    <scope>NUCLEOTIDE SEQUENCE [LARGE SCALE GENOMIC DNA]</scope>
    <source>
        <strain>W619</strain>
    </source>
</reference>
<organism>
    <name type="scientific">Pseudomonas putida (strain W619)</name>
    <dbReference type="NCBI Taxonomy" id="390235"/>
    <lineage>
        <taxon>Bacteria</taxon>
        <taxon>Pseudomonadati</taxon>
        <taxon>Pseudomonadota</taxon>
        <taxon>Gammaproteobacteria</taxon>
        <taxon>Pseudomonadales</taxon>
        <taxon>Pseudomonadaceae</taxon>
        <taxon>Pseudomonas</taxon>
    </lineage>
</organism>
<comment type="function">
    <text evidence="1">Catalyzes the reaction of cyanate with bicarbonate to produce ammonia and carbon dioxide.</text>
</comment>
<comment type="catalytic activity">
    <reaction evidence="1">
        <text>cyanate + hydrogencarbonate + 3 H(+) = NH4(+) + 2 CO2</text>
        <dbReference type="Rhea" id="RHEA:11120"/>
        <dbReference type="ChEBI" id="CHEBI:15378"/>
        <dbReference type="ChEBI" id="CHEBI:16526"/>
        <dbReference type="ChEBI" id="CHEBI:17544"/>
        <dbReference type="ChEBI" id="CHEBI:28938"/>
        <dbReference type="ChEBI" id="CHEBI:29195"/>
        <dbReference type="EC" id="4.2.1.104"/>
    </reaction>
</comment>
<comment type="similarity">
    <text evidence="1">Belongs to the cyanase family.</text>
</comment>
<accession>B1JA05</accession>
<sequence length="156" mass="17011">MIQTQATRTARQELTEVIILAKARKDLSFAQIVDGTGLSEAFVTAALLGQHPLPESAAKVVGDKLDLDADQVALLQSMPVRGSFFDGVPSDPTIYRFYEMMSVYGTTLKALVHEKFGDGIISAINFKLDIKKVEDPDGGHRAVITLDGKYLPTKPF</sequence>
<feature type="chain" id="PRO_1000128232" description="Cyanate hydratase">
    <location>
        <begin position="1"/>
        <end position="156"/>
    </location>
</feature>
<feature type="active site" evidence="1">
    <location>
        <position position="96"/>
    </location>
</feature>
<feature type="active site" evidence="1">
    <location>
        <position position="99"/>
    </location>
</feature>
<feature type="active site" evidence="1">
    <location>
        <position position="122"/>
    </location>
</feature>